<sequence>MAFGKSHRDPYATSVGHLIEKATFAGVQTEDWGQFMHICDIINTTQDGPKDAVKALKKRISKNYNHKEIQLTLSLIDMCVQNCGPSFQSLIVKKEFVKENLVKLLNPRYNLPLDIQNRILNFIKTWSQGFPGGVDVSEVKEVYLDLVKKGVQFPPSEAEAETARQETAQISSNPPTSVPTAPALSSVIAPKNSTVTLVPEQIGKLHSELDMVKMNVRVMSAILMENTPGSENHEDIELLQKLYKTGREMQERIMDLLVVVENEDVTVELIQVNEDLNNAILGYERFTRNQQRILEQNKNQKEATNTTSEPSAPSQDLLDLSPSPRMPRATLGELNTMNNQLSGLNFSLPSSDVTNNLKPSLHPQMNLLALENTEIPPFAQRTSQNLTSSHAYDNFLEHSNSVFLQPVSLQTIAAAPSNQSLPPLPSNHPAMTKSDLQPPNYYEVMEFDPLAPAVTTEAIYEEIDAHQHKGAQNDGD</sequence>
<feature type="chain" id="PRO_0000072566" description="TOM1-like protein 1">
    <location>
        <begin position="1"/>
        <end position="476"/>
    </location>
</feature>
<feature type="domain" description="VHS" evidence="3">
    <location>
        <begin position="22"/>
        <end position="154"/>
    </location>
</feature>
<feature type="domain" description="GAT" evidence="4">
    <location>
        <begin position="200"/>
        <end position="288"/>
    </location>
</feature>
<feature type="region of interest" description="Disordered" evidence="5">
    <location>
        <begin position="155"/>
        <end position="179"/>
    </location>
</feature>
<feature type="region of interest" description="Disordered" evidence="5">
    <location>
        <begin position="298"/>
        <end position="327"/>
    </location>
</feature>
<feature type="region of interest" description="Interaction with GRB2" evidence="1">
    <location>
        <begin position="392"/>
        <end position="395"/>
    </location>
</feature>
<feature type="region of interest" description="Interaction with PIK3R1" evidence="1">
    <location>
        <begin position="442"/>
        <end position="445"/>
    </location>
</feature>
<feature type="short sequence motif" description="SH3-binding" evidence="1">
    <location>
        <begin position="421"/>
        <end position="425"/>
    </location>
</feature>
<feature type="short sequence motif" description="SH2-binding" evidence="1">
    <location>
        <begin position="460"/>
        <end position="463"/>
    </location>
</feature>
<feature type="compositionally biased region" description="Polar residues" evidence="5">
    <location>
        <begin position="170"/>
        <end position="179"/>
    </location>
</feature>
<feature type="compositionally biased region" description="Polar residues" evidence="5">
    <location>
        <begin position="298"/>
        <end position="314"/>
    </location>
</feature>
<feature type="modified residue" description="Phosphoserine" evidence="2">
    <location>
        <position position="171"/>
    </location>
</feature>
<feature type="modified residue" description="Phosphoserine" evidence="9">
    <location>
        <position position="314"/>
    </location>
</feature>
<feature type="modified residue" description="Phosphoserine" evidence="11 14">
    <location>
        <position position="321"/>
    </location>
</feature>
<feature type="modified residue" description="Phosphoserine" evidence="9 10 11 12 13 14">
    <location>
        <position position="323"/>
    </location>
</feature>
<feature type="modified residue" description="Phosphotyrosine" evidence="2">
    <location>
        <position position="460"/>
    </location>
</feature>
<feature type="splice variant" id="VSP_057424" description="In isoform 3." evidence="6">
    <location>
        <begin position="1"/>
        <end position="77"/>
    </location>
</feature>
<feature type="splice variant" id="VSP_056852" description="In isoform 2." evidence="7">
    <original>NF</original>
    <variation>SK</variation>
    <location>
        <begin position="345"/>
        <end position="346"/>
    </location>
</feature>
<feature type="splice variant" id="VSP_056853" description="In isoform 2." evidence="7">
    <location>
        <begin position="347"/>
        <end position="476"/>
    </location>
</feature>
<feature type="sequence variant" id="VAR_047469" description="In dbSNP:rs16955377.">
    <original>R</original>
    <variation>S</variation>
    <location>
        <position position="108"/>
    </location>
</feature>
<feature type="sequence conflict" description="In Ref. 1; CAA08993." evidence="8" ref="1">
    <original>G</original>
    <variation>A</variation>
    <location>
        <position position="48"/>
    </location>
</feature>
<feature type="helix" evidence="15">
    <location>
        <begin position="10"/>
        <end position="12"/>
    </location>
</feature>
<feature type="helix" evidence="15">
    <location>
        <begin position="14"/>
        <end position="22"/>
    </location>
</feature>
<feature type="helix" evidence="15">
    <location>
        <begin position="32"/>
        <end position="44"/>
    </location>
</feature>
<feature type="helix" evidence="15">
    <location>
        <begin position="48"/>
        <end position="60"/>
    </location>
</feature>
<feature type="helix" evidence="15">
    <location>
        <begin position="66"/>
        <end position="82"/>
    </location>
</feature>
<feature type="helix" evidence="15">
    <location>
        <begin position="85"/>
        <end position="91"/>
    </location>
</feature>
<feature type="helix" evidence="15">
    <location>
        <begin position="94"/>
        <end position="97"/>
    </location>
</feature>
<feature type="turn" evidence="15">
    <location>
        <begin position="98"/>
        <end position="101"/>
    </location>
</feature>
<feature type="helix" evidence="15">
    <location>
        <begin position="102"/>
        <end position="105"/>
    </location>
</feature>
<feature type="helix" evidence="15">
    <location>
        <begin position="107"/>
        <end position="109"/>
    </location>
</feature>
<feature type="helix" evidence="15">
    <location>
        <begin position="113"/>
        <end position="127"/>
    </location>
</feature>
<feature type="strand" evidence="15">
    <location>
        <begin position="131"/>
        <end position="133"/>
    </location>
</feature>
<feature type="helix" evidence="15">
    <location>
        <begin position="137"/>
        <end position="148"/>
    </location>
</feature>
<organism>
    <name type="scientific">Homo sapiens</name>
    <name type="common">Human</name>
    <dbReference type="NCBI Taxonomy" id="9606"/>
    <lineage>
        <taxon>Eukaryota</taxon>
        <taxon>Metazoa</taxon>
        <taxon>Chordata</taxon>
        <taxon>Craniata</taxon>
        <taxon>Vertebrata</taxon>
        <taxon>Euteleostomi</taxon>
        <taxon>Mammalia</taxon>
        <taxon>Eutheria</taxon>
        <taxon>Euarchontoglires</taxon>
        <taxon>Primates</taxon>
        <taxon>Haplorrhini</taxon>
        <taxon>Catarrhini</taxon>
        <taxon>Hominidae</taxon>
        <taxon>Homo</taxon>
    </lineage>
</organism>
<protein>
    <recommendedName>
        <fullName>TOM1-like protein 1</fullName>
    </recommendedName>
    <alternativeName>
        <fullName>Src-activating and signaling molecule protein</fullName>
    </alternativeName>
    <alternativeName>
        <fullName>Target of Myb-like protein 1</fullName>
    </alternativeName>
</protein>
<evidence type="ECO:0000250" key="1"/>
<evidence type="ECO:0000250" key="2">
    <source>
        <dbReference type="UniProtKB" id="Q923U0"/>
    </source>
</evidence>
<evidence type="ECO:0000255" key="3">
    <source>
        <dbReference type="PROSITE-ProRule" id="PRU00218"/>
    </source>
</evidence>
<evidence type="ECO:0000255" key="4">
    <source>
        <dbReference type="PROSITE-ProRule" id="PRU00373"/>
    </source>
</evidence>
<evidence type="ECO:0000256" key="5">
    <source>
        <dbReference type="SAM" id="MobiDB-lite"/>
    </source>
</evidence>
<evidence type="ECO:0000303" key="6">
    <source>
    </source>
</evidence>
<evidence type="ECO:0000303" key="7">
    <source>
    </source>
</evidence>
<evidence type="ECO:0000305" key="8"/>
<evidence type="ECO:0007744" key="9">
    <source>
    </source>
</evidence>
<evidence type="ECO:0007744" key="10">
    <source>
    </source>
</evidence>
<evidence type="ECO:0007744" key="11">
    <source>
    </source>
</evidence>
<evidence type="ECO:0007744" key="12">
    <source>
    </source>
</evidence>
<evidence type="ECO:0007744" key="13">
    <source>
    </source>
</evidence>
<evidence type="ECO:0007744" key="14">
    <source>
    </source>
</evidence>
<evidence type="ECO:0007829" key="15">
    <source>
        <dbReference type="PDB" id="3RRU"/>
    </source>
</evidence>
<gene>
    <name type="primary">TOM1L1</name>
    <name type="synonym">SRCASM</name>
</gene>
<name>TM1L1_HUMAN</name>
<proteinExistence type="evidence at protein level"/>
<accession>O75674</accession>
<accession>B7Z9E2</accession>
<accession>Q53G06</accession>
<accession>Q8N749</accession>
<dbReference type="EMBL" id="AJ010071">
    <property type="protein sequence ID" value="CAA08993.1"/>
    <property type="molecule type" value="mRNA"/>
</dbReference>
<dbReference type="EMBL" id="AK315039">
    <property type="protein sequence ID" value="BAG37522.1"/>
    <property type="molecule type" value="mRNA"/>
</dbReference>
<dbReference type="EMBL" id="AK315907">
    <property type="protein sequence ID" value="BAH14278.1"/>
    <property type="molecule type" value="mRNA"/>
</dbReference>
<dbReference type="EMBL" id="AK223125">
    <property type="protein sequence ID" value="BAD96845.1"/>
    <property type="molecule type" value="mRNA"/>
</dbReference>
<dbReference type="EMBL" id="AC007485">
    <property type="status" value="NOT_ANNOTATED_CDS"/>
    <property type="molecule type" value="Genomic_DNA"/>
</dbReference>
<dbReference type="EMBL" id="AC090824">
    <property type="status" value="NOT_ANNOTATED_CDS"/>
    <property type="molecule type" value="Genomic_DNA"/>
</dbReference>
<dbReference type="EMBL" id="KC877665">
    <property type="status" value="NOT_ANNOTATED_CDS"/>
    <property type="molecule type" value="Genomic_DNA"/>
</dbReference>
<dbReference type="EMBL" id="CH471109">
    <property type="protein sequence ID" value="EAW94551.1"/>
    <property type="molecule type" value="Genomic_DNA"/>
</dbReference>
<dbReference type="EMBL" id="CH471109">
    <property type="protein sequence ID" value="EAW94553.1"/>
    <property type="molecule type" value="Genomic_DNA"/>
</dbReference>
<dbReference type="EMBL" id="BC029396">
    <property type="protein sequence ID" value="AAH29396.1"/>
    <property type="molecule type" value="mRNA"/>
</dbReference>
<dbReference type="CCDS" id="CCDS11582.1">
    <molecule id="O75674-1"/>
</dbReference>
<dbReference type="CCDS" id="CCDS82160.1">
    <molecule id="O75674-2"/>
</dbReference>
<dbReference type="CCDS" id="CCDS82161.1">
    <molecule id="O75674-3"/>
</dbReference>
<dbReference type="RefSeq" id="NP_001308102.1">
    <molecule id="O75674-2"/>
    <property type="nucleotide sequence ID" value="NM_001321173.2"/>
</dbReference>
<dbReference type="RefSeq" id="NP_001308103.1">
    <molecule id="O75674-3"/>
    <property type="nucleotide sequence ID" value="NM_001321174.2"/>
</dbReference>
<dbReference type="RefSeq" id="NP_001308104.1">
    <molecule id="O75674-3"/>
    <property type="nucleotide sequence ID" value="NM_001321175.2"/>
</dbReference>
<dbReference type="RefSeq" id="NP_001308105.1">
    <molecule id="O75674-3"/>
    <property type="nucleotide sequence ID" value="NM_001321176.2"/>
</dbReference>
<dbReference type="RefSeq" id="NP_005477.2">
    <molecule id="O75674-1"/>
    <property type="nucleotide sequence ID" value="NM_005486.3"/>
</dbReference>
<dbReference type="RefSeq" id="XP_016879491.1">
    <property type="nucleotide sequence ID" value="XM_017024002.1"/>
</dbReference>
<dbReference type="PDB" id="3RRU">
    <property type="method" value="X-ray"/>
    <property type="resolution" value="3.00 A"/>
    <property type="chains" value="A/B=9-150"/>
</dbReference>
<dbReference type="PDBsum" id="3RRU"/>
<dbReference type="SMR" id="O75674"/>
<dbReference type="BioGRID" id="115352">
    <property type="interactions" value="87"/>
</dbReference>
<dbReference type="ELM" id="O75674"/>
<dbReference type="FunCoup" id="O75674">
    <property type="interactions" value="672"/>
</dbReference>
<dbReference type="IntAct" id="O75674">
    <property type="interactions" value="55"/>
</dbReference>
<dbReference type="MINT" id="O75674"/>
<dbReference type="STRING" id="9606.ENSP00000460823"/>
<dbReference type="MoonDB" id="O75674">
    <property type="type" value="Predicted"/>
</dbReference>
<dbReference type="GlyGen" id="O75674">
    <property type="glycosylation" value="2 sites, 3 N-linked glycans (2 sites)"/>
</dbReference>
<dbReference type="iPTMnet" id="O75674"/>
<dbReference type="PhosphoSitePlus" id="O75674"/>
<dbReference type="BioMuta" id="TOM1L1"/>
<dbReference type="CPTAC" id="CPTAC-284"/>
<dbReference type="CPTAC" id="CPTAC-285"/>
<dbReference type="jPOST" id="O75674"/>
<dbReference type="MassIVE" id="O75674"/>
<dbReference type="PaxDb" id="9606-ENSP00000460823"/>
<dbReference type="PeptideAtlas" id="O75674"/>
<dbReference type="ProteomicsDB" id="50148">
    <molecule id="O75674-1"/>
</dbReference>
<dbReference type="ProteomicsDB" id="7027"/>
<dbReference type="ProteomicsDB" id="72262"/>
<dbReference type="Pumba" id="O75674"/>
<dbReference type="Antibodypedia" id="18249">
    <property type="antibodies" value="247 antibodies from 33 providers"/>
</dbReference>
<dbReference type="DNASU" id="10040"/>
<dbReference type="Ensembl" id="ENST00000348161.8">
    <molecule id="O75674-3"/>
    <property type="protein sequence ID" value="ENSP00000343901.4"/>
    <property type="gene ID" value="ENSG00000141198.16"/>
</dbReference>
<dbReference type="Ensembl" id="ENST00000536554.5">
    <molecule id="O75674-3"/>
    <property type="protein sequence ID" value="ENSP00000443099.1"/>
    <property type="gene ID" value="ENSG00000141198.16"/>
</dbReference>
<dbReference type="Ensembl" id="ENST00000570371.5">
    <molecule id="O75674-2"/>
    <property type="protein sequence ID" value="ENSP00000458553.1"/>
    <property type="gene ID" value="ENSG00000141198.16"/>
</dbReference>
<dbReference type="Ensembl" id="ENST00000575333.5">
    <molecule id="O75674-2"/>
    <property type="protein sequence ID" value="ENSP00000458918.1"/>
    <property type="gene ID" value="ENSG00000141198.16"/>
</dbReference>
<dbReference type="Ensembl" id="ENST00000575882.6">
    <molecule id="O75674-1"/>
    <property type="protein sequence ID" value="ENSP00000460823.1"/>
    <property type="gene ID" value="ENSG00000141198.16"/>
</dbReference>
<dbReference type="GeneID" id="10040"/>
<dbReference type="KEGG" id="hsa:10040"/>
<dbReference type="MANE-Select" id="ENST00000575882.6">
    <property type="protein sequence ID" value="ENSP00000460823.1"/>
    <property type="RefSeq nucleotide sequence ID" value="NM_005486.3"/>
    <property type="RefSeq protein sequence ID" value="NP_005477.2"/>
</dbReference>
<dbReference type="UCSC" id="uc002iuc.4">
    <molecule id="O75674-1"/>
    <property type="organism name" value="human"/>
</dbReference>
<dbReference type="UCSC" id="uc010dbz.3">
    <property type="organism name" value="human"/>
</dbReference>
<dbReference type="AGR" id="HGNC:11983"/>
<dbReference type="CTD" id="10040"/>
<dbReference type="DisGeNET" id="10040"/>
<dbReference type="GeneCards" id="TOM1L1"/>
<dbReference type="HGNC" id="HGNC:11983">
    <property type="gene designation" value="TOM1L1"/>
</dbReference>
<dbReference type="HPA" id="ENSG00000141198">
    <property type="expression patterns" value="Low tissue specificity"/>
</dbReference>
<dbReference type="MIM" id="604701">
    <property type="type" value="gene"/>
</dbReference>
<dbReference type="neXtProt" id="NX_O75674"/>
<dbReference type="OpenTargets" id="ENSG00000141198"/>
<dbReference type="PharmGKB" id="PA36667"/>
<dbReference type="VEuPathDB" id="HostDB:ENSG00000141198"/>
<dbReference type="eggNOG" id="KOG1087">
    <property type="taxonomic scope" value="Eukaryota"/>
</dbReference>
<dbReference type="GeneTree" id="ENSGT00940000160240"/>
<dbReference type="HOGENOM" id="CLU_043812_0_0_1"/>
<dbReference type="InParanoid" id="O75674"/>
<dbReference type="OMA" id="FMHICDL"/>
<dbReference type="OrthoDB" id="2018246at2759"/>
<dbReference type="PAN-GO" id="O75674">
    <property type="GO annotations" value="4 GO annotations based on evolutionary models"/>
</dbReference>
<dbReference type="PhylomeDB" id="O75674"/>
<dbReference type="TreeFam" id="TF314105"/>
<dbReference type="PathwayCommons" id="O75674"/>
<dbReference type="SignaLink" id="O75674"/>
<dbReference type="SIGNOR" id="O75674"/>
<dbReference type="BioGRID-ORCS" id="10040">
    <property type="hits" value="14 hits in 1159 CRISPR screens"/>
</dbReference>
<dbReference type="ChiTaRS" id="TOM1L1">
    <property type="organism name" value="human"/>
</dbReference>
<dbReference type="EvolutionaryTrace" id="O75674"/>
<dbReference type="GeneWiki" id="TOM1L1"/>
<dbReference type="GenomeRNAi" id="10040"/>
<dbReference type="Pharos" id="O75674">
    <property type="development level" value="Tbio"/>
</dbReference>
<dbReference type="PRO" id="PR:O75674"/>
<dbReference type="Proteomes" id="UP000005640">
    <property type="component" value="Chromosome 17"/>
</dbReference>
<dbReference type="RNAct" id="O75674">
    <property type="molecule type" value="protein"/>
</dbReference>
<dbReference type="Bgee" id="ENSG00000141198">
    <property type="expression patterns" value="Expressed in jejunal mucosa and 165 other cell types or tissues"/>
</dbReference>
<dbReference type="ExpressionAtlas" id="O75674">
    <property type="expression patterns" value="baseline and differential"/>
</dbReference>
<dbReference type="GO" id="GO:0005737">
    <property type="term" value="C:cytoplasm"/>
    <property type="evidence" value="ECO:0000314"/>
    <property type="project" value="UniProtKB"/>
</dbReference>
<dbReference type="GO" id="GO:0005829">
    <property type="term" value="C:cytosol"/>
    <property type="evidence" value="ECO:0000314"/>
    <property type="project" value="HGNC-UCL"/>
</dbReference>
<dbReference type="GO" id="GO:0005768">
    <property type="term" value="C:endosome"/>
    <property type="evidence" value="ECO:0000314"/>
    <property type="project" value="UniProtKB"/>
</dbReference>
<dbReference type="GO" id="GO:0010008">
    <property type="term" value="C:endosome membrane"/>
    <property type="evidence" value="ECO:0007669"/>
    <property type="project" value="UniProtKB-SubCell"/>
</dbReference>
<dbReference type="GO" id="GO:0070062">
    <property type="term" value="C:extracellular exosome"/>
    <property type="evidence" value="ECO:0007005"/>
    <property type="project" value="UniProtKB"/>
</dbReference>
<dbReference type="GO" id="GO:0005795">
    <property type="term" value="C:Golgi stack"/>
    <property type="evidence" value="ECO:0007669"/>
    <property type="project" value="UniProtKB-SubCell"/>
</dbReference>
<dbReference type="GO" id="GO:0005764">
    <property type="term" value="C:lysosome"/>
    <property type="evidence" value="ECO:0000304"/>
    <property type="project" value="ProtInc"/>
</dbReference>
<dbReference type="GO" id="GO:0016020">
    <property type="term" value="C:membrane"/>
    <property type="evidence" value="ECO:0000318"/>
    <property type="project" value="GO_Central"/>
</dbReference>
<dbReference type="GO" id="GO:0030276">
    <property type="term" value="F:clathrin binding"/>
    <property type="evidence" value="ECO:0000314"/>
    <property type="project" value="UniProtKB"/>
</dbReference>
<dbReference type="GO" id="GO:0035091">
    <property type="term" value="F:phosphatidylinositol binding"/>
    <property type="evidence" value="ECO:0007669"/>
    <property type="project" value="InterPro"/>
</dbReference>
<dbReference type="GO" id="GO:0030295">
    <property type="term" value="F:protein kinase activator activity"/>
    <property type="evidence" value="ECO:0007669"/>
    <property type="project" value="Ensembl"/>
</dbReference>
<dbReference type="GO" id="GO:0019901">
    <property type="term" value="F:protein kinase binding"/>
    <property type="evidence" value="ECO:0000353"/>
    <property type="project" value="UniProtKB"/>
</dbReference>
<dbReference type="GO" id="GO:0017124">
    <property type="term" value="F:SH3 domain binding"/>
    <property type="evidence" value="ECO:0007669"/>
    <property type="project" value="UniProtKB-KW"/>
</dbReference>
<dbReference type="GO" id="GO:0043130">
    <property type="term" value="F:ubiquitin binding"/>
    <property type="evidence" value="ECO:0000304"/>
    <property type="project" value="HGNC-UCL"/>
</dbReference>
<dbReference type="GO" id="GO:0032147">
    <property type="term" value="P:activation of protein kinase activity"/>
    <property type="evidence" value="ECO:0000314"/>
    <property type="project" value="UniProtKB"/>
</dbReference>
<dbReference type="GO" id="GO:0045839">
    <property type="term" value="P:negative regulation of mitotic nuclear division"/>
    <property type="evidence" value="ECO:0000314"/>
    <property type="project" value="UniProtKB"/>
</dbReference>
<dbReference type="GO" id="GO:0031954">
    <property type="term" value="P:positive regulation of protein autophosphorylation"/>
    <property type="evidence" value="ECO:0000314"/>
    <property type="project" value="UniProtKB"/>
</dbReference>
<dbReference type="GO" id="GO:0015031">
    <property type="term" value="P:protein transport"/>
    <property type="evidence" value="ECO:0007669"/>
    <property type="project" value="UniProtKB-KW"/>
</dbReference>
<dbReference type="GO" id="GO:0007165">
    <property type="term" value="P:signal transduction"/>
    <property type="evidence" value="ECO:0000314"/>
    <property type="project" value="UniProtKB"/>
</dbReference>
<dbReference type="GO" id="GO:0043162">
    <property type="term" value="P:ubiquitin-dependent protein catabolic process via the multivesicular body sorting pathway"/>
    <property type="evidence" value="ECO:0000303"/>
    <property type="project" value="HGNC-UCL"/>
</dbReference>
<dbReference type="CDD" id="cd14237">
    <property type="entry name" value="GAT_TM1L1"/>
    <property type="match status" value="1"/>
</dbReference>
<dbReference type="CDD" id="cd16997">
    <property type="entry name" value="VHS_Tom1L1"/>
    <property type="match status" value="1"/>
</dbReference>
<dbReference type="FunFam" id="1.20.58.160:FF:000001">
    <property type="entry name" value="TOM1-like protein 2 isoform X1"/>
    <property type="match status" value="1"/>
</dbReference>
<dbReference type="FunFam" id="1.25.40.90:FF:000003">
    <property type="entry name" value="TOM1-like protein 2 isoform X1"/>
    <property type="match status" value="1"/>
</dbReference>
<dbReference type="Gene3D" id="1.20.58.160">
    <property type="match status" value="1"/>
</dbReference>
<dbReference type="Gene3D" id="1.25.40.90">
    <property type="match status" value="1"/>
</dbReference>
<dbReference type="InterPro" id="IPR008942">
    <property type="entry name" value="ENTH_VHS"/>
</dbReference>
<dbReference type="InterPro" id="IPR004152">
    <property type="entry name" value="GAT_dom"/>
</dbReference>
<dbReference type="InterPro" id="IPR038425">
    <property type="entry name" value="GAT_sf"/>
</dbReference>
<dbReference type="InterPro" id="IPR014645">
    <property type="entry name" value="TOM1"/>
</dbReference>
<dbReference type="InterPro" id="IPR027428">
    <property type="entry name" value="TOM1L1_GAT_dom"/>
</dbReference>
<dbReference type="InterPro" id="IPR047013">
    <property type="entry name" value="TOM1L1_VHS_dom"/>
</dbReference>
<dbReference type="InterPro" id="IPR002014">
    <property type="entry name" value="VHS_dom"/>
</dbReference>
<dbReference type="PANTHER" id="PTHR13856:SF28">
    <property type="entry name" value="TOM1-LIKE PROTEIN 1"/>
    <property type="match status" value="1"/>
</dbReference>
<dbReference type="PANTHER" id="PTHR13856">
    <property type="entry name" value="VHS DOMAIN CONTAINING PROTEIN FAMILY"/>
    <property type="match status" value="1"/>
</dbReference>
<dbReference type="Pfam" id="PF03127">
    <property type="entry name" value="GAT"/>
    <property type="match status" value="1"/>
</dbReference>
<dbReference type="Pfam" id="PF00790">
    <property type="entry name" value="VHS"/>
    <property type="match status" value="1"/>
</dbReference>
<dbReference type="PIRSF" id="PIRSF036948">
    <property type="entry name" value="TOM1"/>
    <property type="match status" value="1"/>
</dbReference>
<dbReference type="SMART" id="SM00288">
    <property type="entry name" value="VHS"/>
    <property type="match status" value="1"/>
</dbReference>
<dbReference type="SUPFAM" id="SSF48464">
    <property type="entry name" value="ENTH/VHS domain"/>
    <property type="match status" value="1"/>
</dbReference>
<dbReference type="SUPFAM" id="SSF89009">
    <property type="entry name" value="GAT-like domain"/>
    <property type="match status" value="1"/>
</dbReference>
<dbReference type="PROSITE" id="PS50909">
    <property type="entry name" value="GAT"/>
    <property type="match status" value="1"/>
</dbReference>
<dbReference type="PROSITE" id="PS50179">
    <property type="entry name" value="VHS"/>
    <property type="match status" value="1"/>
</dbReference>
<reference key="1">
    <citation type="journal article" date="1999" name="Genomics">
        <title>TOM1 genes map to human chromosome 22q13.1 and mouse chromosome 8C1 and encode proteins similar to the endosomal proteins HGS and STAM.</title>
        <authorList>
            <person name="Seroussi E."/>
            <person name="Kedra D."/>
            <person name="Kost-Alimova M."/>
            <person name="Sandberg-Nordqvist A.-C."/>
            <person name="Fransson I."/>
            <person name="Jacobs J.F.M."/>
            <person name="Fu Y."/>
            <person name="Pan H.-Q."/>
            <person name="Roe B.A."/>
            <person name="Imreh S."/>
            <person name="Dumanski J.P."/>
        </authorList>
    </citation>
    <scope>NUCLEOTIDE SEQUENCE [MRNA] (ISOFORM 1)</scope>
</reference>
<reference key="2">
    <citation type="journal article" date="2004" name="Nat. Genet.">
        <title>Complete sequencing and characterization of 21,243 full-length human cDNAs.</title>
        <authorList>
            <person name="Ota T."/>
            <person name="Suzuki Y."/>
            <person name="Nishikawa T."/>
            <person name="Otsuki T."/>
            <person name="Sugiyama T."/>
            <person name="Irie R."/>
            <person name="Wakamatsu A."/>
            <person name="Hayashi K."/>
            <person name="Sato H."/>
            <person name="Nagai K."/>
            <person name="Kimura K."/>
            <person name="Makita H."/>
            <person name="Sekine M."/>
            <person name="Obayashi M."/>
            <person name="Nishi T."/>
            <person name="Shibahara T."/>
            <person name="Tanaka T."/>
            <person name="Ishii S."/>
            <person name="Yamamoto J."/>
            <person name="Saito K."/>
            <person name="Kawai Y."/>
            <person name="Isono Y."/>
            <person name="Nakamura Y."/>
            <person name="Nagahari K."/>
            <person name="Murakami K."/>
            <person name="Yasuda T."/>
            <person name="Iwayanagi T."/>
            <person name="Wagatsuma M."/>
            <person name="Shiratori A."/>
            <person name="Sudo H."/>
            <person name="Hosoiri T."/>
            <person name="Kaku Y."/>
            <person name="Kodaira H."/>
            <person name="Kondo H."/>
            <person name="Sugawara M."/>
            <person name="Takahashi M."/>
            <person name="Kanda K."/>
            <person name="Yokoi T."/>
            <person name="Furuya T."/>
            <person name="Kikkawa E."/>
            <person name="Omura Y."/>
            <person name="Abe K."/>
            <person name="Kamihara K."/>
            <person name="Katsuta N."/>
            <person name="Sato K."/>
            <person name="Tanikawa M."/>
            <person name="Yamazaki M."/>
            <person name="Ninomiya K."/>
            <person name="Ishibashi T."/>
            <person name="Yamashita H."/>
            <person name="Murakawa K."/>
            <person name="Fujimori K."/>
            <person name="Tanai H."/>
            <person name="Kimata M."/>
            <person name="Watanabe M."/>
            <person name="Hiraoka S."/>
            <person name="Chiba Y."/>
            <person name="Ishida S."/>
            <person name="Ono Y."/>
            <person name="Takiguchi S."/>
            <person name="Watanabe S."/>
            <person name="Yosida M."/>
            <person name="Hotuta T."/>
            <person name="Kusano J."/>
            <person name="Kanehori K."/>
            <person name="Takahashi-Fujii A."/>
            <person name="Hara H."/>
            <person name="Tanase T.-O."/>
            <person name="Nomura Y."/>
            <person name="Togiya S."/>
            <person name="Komai F."/>
            <person name="Hara R."/>
            <person name="Takeuchi K."/>
            <person name="Arita M."/>
            <person name="Imose N."/>
            <person name="Musashino K."/>
            <person name="Yuuki H."/>
            <person name="Oshima A."/>
            <person name="Sasaki N."/>
            <person name="Aotsuka S."/>
            <person name="Yoshikawa Y."/>
            <person name="Matsunawa H."/>
            <person name="Ichihara T."/>
            <person name="Shiohata N."/>
            <person name="Sano S."/>
            <person name="Moriya S."/>
            <person name="Momiyama H."/>
            <person name="Satoh N."/>
            <person name="Takami S."/>
            <person name="Terashima Y."/>
            <person name="Suzuki O."/>
            <person name="Nakagawa S."/>
            <person name="Senoh A."/>
            <person name="Mizoguchi H."/>
            <person name="Goto Y."/>
            <person name="Shimizu F."/>
            <person name="Wakebe H."/>
            <person name="Hishigaki H."/>
            <person name="Watanabe T."/>
            <person name="Sugiyama A."/>
            <person name="Takemoto M."/>
            <person name="Kawakami B."/>
            <person name="Yamazaki M."/>
            <person name="Watanabe K."/>
            <person name="Kumagai A."/>
            <person name="Itakura S."/>
            <person name="Fukuzumi Y."/>
            <person name="Fujimori Y."/>
            <person name="Komiyama M."/>
            <person name="Tashiro H."/>
            <person name="Tanigami A."/>
            <person name="Fujiwara T."/>
            <person name="Ono T."/>
            <person name="Yamada K."/>
            <person name="Fujii Y."/>
            <person name="Ozaki K."/>
            <person name="Hirao M."/>
            <person name="Ohmori Y."/>
            <person name="Kawabata A."/>
            <person name="Hikiji T."/>
            <person name="Kobatake N."/>
            <person name="Inagaki H."/>
            <person name="Ikema Y."/>
            <person name="Okamoto S."/>
            <person name="Okitani R."/>
            <person name="Kawakami T."/>
            <person name="Noguchi S."/>
            <person name="Itoh T."/>
            <person name="Shigeta K."/>
            <person name="Senba T."/>
            <person name="Matsumura K."/>
            <person name="Nakajima Y."/>
            <person name="Mizuno T."/>
            <person name="Morinaga M."/>
            <person name="Sasaki M."/>
            <person name="Togashi T."/>
            <person name="Oyama M."/>
            <person name="Hata H."/>
            <person name="Watanabe M."/>
            <person name="Komatsu T."/>
            <person name="Mizushima-Sugano J."/>
            <person name="Satoh T."/>
            <person name="Shirai Y."/>
            <person name="Takahashi Y."/>
            <person name="Nakagawa K."/>
            <person name="Okumura K."/>
            <person name="Nagase T."/>
            <person name="Nomura N."/>
            <person name="Kikuchi H."/>
            <person name="Masuho Y."/>
            <person name="Yamashita R."/>
            <person name="Nakai K."/>
            <person name="Yada T."/>
            <person name="Nakamura Y."/>
            <person name="Ohara O."/>
            <person name="Isogai T."/>
            <person name="Sugano S."/>
        </authorList>
    </citation>
    <scope>NUCLEOTIDE SEQUENCE [LARGE SCALE MRNA] (ISOFORMS 1 AND 3)</scope>
    <source>
        <tissue>Adrenal gland</tissue>
        <tissue>Trachea</tissue>
    </source>
</reference>
<reference key="3">
    <citation type="submission" date="2005-04" db="EMBL/GenBank/DDBJ databases">
        <authorList>
            <person name="Suzuki Y."/>
            <person name="Sugano S."/>
            <person name="Totoki Y."/>
            <person name="Toyoda A."/>
            <person name="Takeda T."/>
            <person name="Sakaki Y."/>
            <person name="Tanaka A."/>
            <person name="Yokoyama S."/>
        </authorList>
    </citation>
    <scope>NUCLEOTIDE SEQUENCE [LARGE SCALE MRNA] (ISOFORM 1)</scope>
    <source>
        <tissue>Kidney</tissue>
    </source>
</reference>
<reference key="4">
    <citation type="journal article" date="2006" name="Nature">
        <title>DNA sequence of human chromosome 17 and analysis of rearrangement in the human lineage.</title>
        <authorList>
            <person name="Zody M.C."/>
            <person name="Garber M."/>
            <person name="Adams D.J."/>
            <person name="Sharpe T."/>
            <person name="Harrow J."/>
            <person name="Lupski J.R."/>
            <person name="Nicholson C."/>
            <person name="Searle S.M."/>
            <person name="Wilming L."/>
            <person name="Young S.K."/>
            <person name="Abouelleil A."/>
            <person name="Allen N.R."/>
            <person name="Bi W."/>
            <person name="Bloom T."/>
            <person name="Borowsky M.L."/>
            <person name="Bugalter B.E."/>
            <person name="Butler J."/>
            <person name="Chang J.L."/>
            <person name="Chen C.-K."/>
            <person name="Cook A."/>
            <person name="Corum B."/>
            <person name="Cuomo C.A."/>
            <person name="de Jong P.J."/>
            <person name="DeCaprio D."/>
            <person name="Dewar K."/>
            <person name="FitzGerald M."/>
            <person name="Gilbert J."/>
            <person name="Gibson R."/>
            <person name="Gnerre S."/>
            <person name="Goldstein S."/>
            <person name="Grafham D.V."/>
            <person name="Grocock R."/>
            <person name="Hafez N."/>
            <person name="Hagopian D.S."/>
            <person name="Hart E."/>
            <person name="Norman C.H."/>
            <person name="Humphray S."/>
            <person name="Jaffe D.B."/>
            <person name="Jones M."/>
            <person name="Kamal M."/>
            <person name="Khodiyar V.K."/>
            <person name="LaButti K."/>
            <person name="Laird G."/>
            <person name="Lehoczky J."/>
            <person name="Liu X."/>
            <person name="Lokyitsang T."/>
            <person name="Loveland J."/>
            <person name="Lui A."/>
            <person name="Macdonald P."/>
            <person name="Major J.E."/>
            <person name="Matthews L."/>
            <person name="Mauceli E."/>
            <person name="McCarroll S.A."/>
            <person name="Mihalev A.H."/>
            <person name="Mudge J."/>
            <person name="Nguyen C."/>
            <person name="Nicol R."/>
            <person name="O'Leary S.B."/>
            <person name="Osoegawa K."/>
            <person name="Schwartz D.C."/>
            <person name="Shaw-Smith C."/>
            <person name="Stankiewicz P."/>
            <person name="Steward C."/>
            <person name="Swarbreck D."/>
            <person name="Venkataraman V."/>
            <person name="Whittaker C.A."/>
            <person name="Yang X."/>
            <person name="Zimmer A.R."/>
            <person name="Bradley A."/>
            <person name="Hubbard T."/>
            <person name="Birren B.W."/>
            <person name="Rogers J."/>
            <person name="Lander E.S."/>
            <person name="Nusbaum C."/>
        </authorList>
    </citation>
    <scope>NUCLEOTIDE SEQUENCE [LARGE SCALE GENOMIC DNA]</scope>
</reference>
<reference key="5">
    <citation type="submission" date="2005-09" db="EMBL/GenBank/DDBJ databases">
        <authorList>
            <person name="Mural R.J."/>
            <person name="Istrail S."/>
            <person name="Sutton G.G."/>
            <person name="Florea L."/>
            <person name="Halpern A.L."/>
            <person name="Mobarry C.M."/>
            <person name="Lippert R."/>
            <person name="Walenz B."/>
            <person name="Shatkay H."/>
            <person name="Dew I."/>
            <person name="Miller J.R."/>
            <person name="Flanigan M.J."/>
            <person name="Edwards N.J."/>
            <person name="Bolanos R."/>
            <person name="Fasulo D."/>
            <person name="Halldorsson B.V."/>
            <person name="Hannenhalli S."/>
            <person name="Turner R."/>
            <person name="Yooseph S."/>
            <person name="Lu F."/>
            <person name="Nusskern D.R."/>
            <person name="Shue B.C."/>
            <person name="Zheng X.H."/>
            <person name="Zhong F."/>
            <person name="Delcher A.L."/>
            <person name="Huson D.H."/>
            <person name="Kravitz S.A."/>
            <person name="Mouchard L."/>
            <person name="Reinert K."/>
            <person name="Remington K.A."/>
            <person name="Clark A.G."/>
            <person name="Waterman M.S."/>
            <person name="Eichler E.E."/>
            <person name="Adams M.D."/>
            <person name="Hunkapiller M.W."/>
            <person name="Myers E.W."/>
            <person name="Venter J.C."/>
        </authorList>
    </citation>
    <scope>NUCLEOTIDE SEQUENCE [LARGE SCALE GENOMIC DNA]</scope>
</reference>
<reference key="6">
    <citation type="journal article" date="2004" name="Genome Res.">
        <title>The status, quality, and expansion of the NIH full-length cDNA project: the Mammalian Gene Collection (MGC).</title>
        <authorList>
            <consortium name="The MGC Project Team"/>
        </authorList>
    </citation>
    <scope>NUCLEOTIDE SEQUENCE [LARGE SCALE MRNA] (ISOFORM 2)</scope>
    <source>
        <tissue>Kidney</tissue>
    </source>
</reference>
<reference key="7">
    <citation type="journal article" date="2007" name="Science">
        <title>ATM and ATR substrate analysis reveals extensive protein networks responsive to DNA damage.</title>
        <authorList>
            <person name="Matsuoka S."/>
            <person name="Ballif B.A."/>
            <person name="Smogorzewska A."/>
            <person name="McDonald E.R. III"/>
            <person name="Hurov K.E."/>
            <person name="Luo J."/>
            <person name="Bakalarski C.E."/>
            <person name="Zhao Z."/>
            <person name="Solimini N."/>
            <person name="Lerenthal Y."/>
            <person name="Shiloh Y."/>
            <person name="Gygi S.P."/>
            <person name="Elledge S.J."/>
        </authorList>
    </citation>
    <scope>PHOSPHORYLATION [LARGE SCALE ANALYSIS] AT SER-314 AND SER-323</scope>
    <scope>IDENTIFICATION BY MASS SPECTROMETRY [LARGE SCALE ANALYSIS]</scope>
    <source>
        <tissue>Embryonic kidney</tissue>
    </source>
</reference>
<reference key="8">
    <citation type="journal article" date="2008" name="Proc. Natl. Acad. Sci. U.S.A.">
        <title>A quantitative atlas of mitotic phosphorylation.</title>
        <authorList>
            <person name="Dephoure N."/>
            <person name="Zhou C."/>
            <person name="Villen J."/>
            <person name="Beausoleil S.A."/>
            <person name="Bakalarski C.E."/>
            <person name="Elledge S.J."/>
            <person name="Gygi S.P."/>
        </authorList>
    </citation>
    <scope>PHOSPHORYLATION [LARGE SCALE ANALYSIS] AT SER-323</scope>
    <scope>IDENTIFICATION BY MASS SPECTROMETRY [LARGE SCALE ANALYSIS]</scope>
    <source>
        <tissue>Cervix carcinoma</tissue>
    </source>
</reference>
<reference key="9">
    <citation type="journal article" date="2009" name="Anal. Chem.">
        <title>Lys-N and trypsin cover complementary parts of the phosphoproteome in a refined SCX-based approach.</title>
        <authorList>
            <person name="Gauci S."/>
            <person name="Helbig A.O."/>
            <person name="Slijper M."/>
            <person name="Krijgsveld J."/>
            <person name="Heck A.J."/>
            <person name="Mohammed S."/>
        </authorList>
    </citation>
    <scope>IDENTIFICATION BY MASS SPECTROMETRY [LARGE SCALE ANALYSIS]</scope>
</reference>
<reference key="10">
    <citation type="journal article" date="2009" name="Sci. Signal.">
        <title>Quantitative phosphoproteomic analysis of T cell receptor signaling reveals system-wide modulation of protein-protein interactions.</title>
        <authorList>
            <person name="Mayya V."/>
            <person name="Lundgren D.H."/>
            <person name="Hwang S.-I."/>
            <person name="Rezaul K."/>
            <person name="Wu L."/>
            <person name="Eng J.K."/>
            <person name="Rodionov V."/>
            <person name="Han D.K."/>
        </authorList>
    </citation>
    <scope>PHOSPHORYLATION [LARGE SCALE ANALYSIS] AT SER-321 AND SER-323</scope>
    <scope>IDENTIFICATION BY MASS SPECTROMETRY [LARGE SCALE ANALYSIS]</scope>
    <source>
        <tissue>Leukemic T-cell</tissue>
    </source>
</reference>
<reference key="11">
    <citation type="journal article" date="2010" name="Sci. Signal.">
        <title>Quantitative phosphoproteomics reveals widespread full phosphorylation site occupancy during mitosis.</title>
        <authorList>
            <person name="Olsen J.V."/>
            <person name="Vermeulen M."/>
            <person name="Santamaria A."/>
            <person name="Kumar C."/>
            <person name="Miller M.L."/>
            <person name="Jensen L.J."/>
            <person name="Gnad F."/>
            <person name="Cox J."/>
            <person name="Jensen T.S."/>
            <person name="Nigg E.A."/>
            <person name="Brunak S."/>
            <person name="Mann M."/>
        </authorList>
    </citation>
    <scope>PHOSPHORYLATION [LARGE SCALE ANALYSIS] AT SER-323</scope>
    <scope>IDENTIFICATION BY MASS SPECTROMETRY [LARGE SCALE ANALYSIS]</scope>
    <source>
        <tissue>Cervix carcinoma</tissue>
    </source>
</reference>
<reference key="12">
    <citation type="journal article" date="2013" name="J. Proteome Res.">
        <title>Toward a comprehensive characterization of a human cancer cell phosphoproteome.</title>
        <authorList>
            <person name="Zhou H."/>
            <person name="Di Palma S."/>
            <person name="Preisinger C."/>
            <person name="Peng M."/>
            <person name="Polat A.N."/>
            <person name="Heck A.J."/>
            <person name="Mohammed S."/>
        </authorList>
    </citation>
    <scope>PHOSPHORYLATION [LARGE SCALE ANALYSIS] AT SER-323</scope>
    <scope>IDENTIFICATION BY MASS SPECTROMETRY [LARGE SCALE ANALYSIS]</scope>
    <source>
        <tissue>Cervix carcinoma</tissue>
        <tissue>Erythroleukemia</tissue>
    </source>
</reference>
<reference key="13">
    <citation type="journal article" date="2014" name="J. Proteomics">
        <title>An enzyme assisted RP-RPLC approach for in-depth analysis of human liver phosphoproteome.</title>
        <authorList>
            <person name="Bian Y."/>
            <person name="Song C."/>
            <person name="Cheng K."/>
            <person name="Dong M."/>
            <person name="Wang F."/>
            <person name="Huang J."/>
            <person name="Sun D."/>
            <person name="Wang L."/>
            <person name="Ye M."/>
            <person name="Zou H."/>
        </authorList>
    </citation>
    <scope>PHOSPHORYLATION [LARGE SCALE ANALYSIS] AT SER-321 AND SER-323</scope>
    <scope>IDENTIFICATION BY MASS SPECTROMETRY [LARGE SCALE ANALYSIS]</scope>
    <source>
        <tissue>Liver</tissue>
    </source>
</reference>
<reference key="14">
    <citation type="submission" date="2011-06" db="PDB data bank">
        <title>X-ray crystal structure of the VHS domain of human TOM1-like protein, Northeast structural genomics consortium target HR3050E.</title>
        <authorList>
            <consortium name="Northeast structural genomics consortium (NESG)"/>
        </authorList>
    </citation>
    <scope>X-RAY CRYSTALLOGRAPHY (3.0 ANGSTROMS) OF 9-150</scope>
</reference>
<comment type="function">
    <text evidence="1">Probable adapter protein involved in signaling pathways. Interacts with the SH2 and SH3 domains of various signaling proteins when it is phosphorylated. May promote FYN activation, possibly by disrupting intramolecular SH3-dependent interactions (By similarity).</text>
</comment>
<comment type="subunit">
    <text evidence="1">Interacts with FYN, GRB2 and PIK3R1 when phosphorylated. Interacts with LYN.</text>
</comment>
<comment type="interaction">
    <interactant intactId="EBI-712991">
        <id>O75674</id>
    </interactant>
    <interactant intactId="EBI-354967">
        <id>Q00610</id>
        <label>CLTC</label>
    </interactant>
    <organismsDiffer>false</organismsDiffer>
    <experiments>4</experiments>
</comment>
<comment type="interaction">
    <interactant intactId="EBI-712991">
        <id>O75674</id>
    </interactant>
    <interactant intactId="EBI-297353">
        <id>P00533</id>
        <label>EGFR</label>
    </interactant>
    <organismsDiffer>false</organismsDiffer>
    <experiments>6</experiments>
</comment>
<comment type="interaction">
    <interactant intactId="EBI-712991">
        <id>O75674</id>
    </interactant>
    <interactant intactId="EBI-401755">
        <id>P62993</id>
        <label>GRB2</label>
    </interactant>
    <organismsDiffer>false</organismsDiffer>
    <experiments>2</experiments>
</comment>
<comment type="interaction">
    <interactant intactId="EBI-712991">
        <id>O75674</id>
    </interactant>
    <interactant intactId="EBI-74615">
        <id>Q9H0E2</id>
        <label>TOLLIP</label>
    </interactant>
    <organismsDiffer>false</organismsDiffer>
    <experiments>6</experiments>
</comment>
<comment type="interaction">
    <interactant intactId="EBI-712991">
        <id>O75674</id>
    </interactant>
    <interactant intactId="EBI-74634">
        <id>O60784</id>
        <label>TOM1</label>
    </interactant>
    <organismsDiffer>false</organismsDiffer>
    <experiments>2</experiments>
</comment>
<comment type="interaction">
    <interactant intactId="EBI-712991">
        <id>O75674</id>
    </interactant>
    <interactant intactId="EBI-346882">
        <id>Q99816</id>
        <label>TSG101</label>
    </interactant>
    <organismsDiffer>false</organismsDiffer>
    <experiments>2</experiments>
</comment>
<comment type="interaction">
    <interactant intactId="EBI-712991">
        <id>O75674</id>
    </interactant>
    <interactant intactId="EBI-297549">
        <id>P52735</id>
        <label>VAV2</label>
    </interactant>
    <organismsDiffer>false</organismsDiffer>
    <experiments>2</experiments>
</comment>
<comment type="interaction">
    <interactant intactId="EBI-12011552">
        <id>O75674-2</id>
    </interactant>
    <interactant intactId="EBI-11514233">
        <id>P59910</id>
        <label>DNAJB13</label>
    </interactant>
    <organismsDiffer>false</organismsDiffer>
    <experiments>3</experiments>
</comment>
<comment type="interaction">
    <interactant intactId="EBI-12011552">
        <id>O75674-2</id>
    </interactant>
    <interactant intactId="EBI-74615">
        <id>Q9H0E2</id>
        <label>TOLLIP</label>
    </interactant>
    <organismsDiffer>false</organismsDiffer>
    <experiments>5</experiments>
</comment>
<comment type="subcellular location">
    <subcellularLocation>
        <location>Golgi apparatus</location>
        <location>Golgi stack</location>
    </subcellularLocation>
    <subcellularLocation>
        <location evidence="8">Endosome membrane</location>
    </subcellularLocation>
    <subcellularLocation>
        <location evidence="1">Cytoplasm</location>
    </subcellularLocation>
    <subcellularLocation>
        <location evidence="1">Membrane</location>
        <topology evidence="1">Peripheral membrane protein</topology>
        <orientation evidence="1">Cytoplasmic side</orientation>
    </subcellularLocation>
    <text evidence="1">A small proportion is membrane-associated.</text>
</comment>
<comment type="alternative products">
    <event type="alternative splicing"/>
    <isoform>
        <id>O75674-1</id>
        <name>1</name>
        <sequence type="displayed"/>
    </isoform>
    <isoform>
        <id>O75674-2</id>
        <name>2</name>
        <sequence type="described" ref="VSP_056852 VSP_056853"/>
    </isoform>
    <isoform>
        <id>O75674-3</id>
        <name>3</name>
        <sequence type="described" ref="VSP_057424"/>
    </isoform>
</comment>
<comment type="PTM">
    <text evidence="1">Phosphorylated on tyrosines by FYN and LYN.</text>
</comment>
<comment type="similarity">
    <text evidence="8">Belongs to the TOM1 family.</text>
</comment>
<keyword id="KW-0002">3D-structure</keyword>
<keyword id="KW-0025">Alternative splicing</keyword>
<keyword id="KW-0963">Cytoplasm</keyword>
<keyword id="KW-0967">Endosome</keyword>
<keyword id="KW-0333">Golgi apparatus</keyword>
<keyword id="KW-0472">Membrane</keyword>
<keyword id="KW-0597">Phosphoprotein</keyword>
<keyword id="KW-0653">Protein transport</keyword>
<keyword id="KW-1267">Proteomics identification</keyword>
<keyword id="KW-1185">Reference proteome</keyword>
<keyword id="KW-0729">SH3-binding</keyword>
<keyword id="KW-0813">Transport</keyword>